<keyword id="KW-1015">Disulfide bond</keyword>
<keyword id="KW-0325">Glycoprotein</keyword>
<keyword id="KW-1199">Hemostasis impairing toxin</keyword>
<keyword id="KW-0378">Hydrolase</keyword>
<keyword id="KW-0645">Protease</keyword>
<keyword id="KW-0964">Secreted</keyword>
<keyword id="KW-0720">Serine protease</keyword>
<keyword id="KW-0732">Signal</keyword>
<keyword id="KW-0800">Toxin</keyword>
<keyword id="KW-0865">Zymogen</keyword>
<comment type="function">
    <text evidence="1">Snake venom serine protease that may act in the hemostasis system of the prey.</text>
</comment>
<comment type="subunit">
    <text evidence="1">Monomer.</text>
</comment>
<comment type="subcellular location">
    <subcellularLocation>
        <location evidence="1">Secreted</location>
    </subcellularLocation>
</comment>
<comment type="tissue specificity">
    <text>Expressed by the venom gland.</text>
</comment>
<comment type="similarity">
    <text evidence="3">Belongs to the peptidase S1 family. Snake venom subfamily.</text>
</comment>
<organism>
    <name type="scientific">Trimeresurus stejnegeri</name>
    <name type="common">Chinese green tree viper</name>
    <name type="synonym">Viridovipera stejnegeri</name>
    <dbReference type="NCBI Taxonomy" id="39682"/>
    <lineage>
        <taxon>Eukaryota</taxon>
        <taxon>Metazoa</taxon>
        <taxon>Chordata</taxon>
        <taxon>Craniata</taxon>
        <taxon>Vertebrata</taxon>
        <taxon>Euteleostomi</taxon>
        <taxon>Lepidosauria</taxon>
        <taxon>Squamata</taxon>
        <taxon>Bifurcata</taxon>
        <taxon>Unidentata</taxon>
        <taxon>Episquamata</taxon>
        <taxon>Toxicofera</taxon>
        <taxon>Serpentes</taxon>
        <taxon>Colubroidea</taxon>
        <taxon>Viperidae</taxon>
        <taxon>Crotalinae</taxon>
        <taxon>Trimeresurus</taxon>
    </lineage>
</organism>
<sequence>MVLIRVLANLLILQLSYAQKSSKLVVGGDECNINEHPFLVLVYHDGYQCGGTLINEEWVLTAAHCDGKKMKLRFGLHSKNVPNKDKQTRVPKEKFFCLSSKYFIKWGKDIMLIRLNRPVNNSTHIAPLSLPSSPPSQNTVCNIMGWGTISPTKEIYPDVPHCANISILDHAVCRAFYPGLLEKSKTLCAGILEGGKDICQGDSGGPLICNGQIQGIVSVGGNPCAEPRVPAIYTKVFDHLDWIKSIIAGNTAATCPL</sequence>
<proteinExistence type="evidence at transcript level"/>
<name>VSP03_TRIST</name>
<feature type="signal peptide" evidence="2">
    <location>
        <begin position="1"/>
        <end position="18"/>
    </location>
</feature>
<feature type="propeptide" id="PRO_0000295828" evidence="1">
    <location>
        <begin position="19"/>
        <end position="24"/>
    </location>
</feature>
<feature type="chain" id="PRO_5000061224" description="Snake venom serine protease KN3">
    <location>
        <begin position="25"/>
        <end position="257"/>
    </location>
</feature>
<feature type="domain" description="Peptidase S1" evidence="3">
    <location>
        <begin position="25"/>
        <end position="248"/>
    </location>
</feature>
<feature type="active site" description="Charge relay system" evidence="1">
    <location>
        <position position="64"/>
    </location>
</feature>
<feature type="active site" description="Charge relay system" evidence="1">
    <location>
        <position position="109"/>
    </location>
</feature>
<feature type="active site" description="Charge relay system" evidence="1">
    <location>
        <position position="203"/>
    </location>
</feature>
<feature type="glycosylation site" description="N-linked (GlcNAc...) asparagine" evidence="2">
    <location>
        <position position="120"/>
    </location>
</feature>
<feature type="glycosylation site" description="N-linked (GlcNAc...) asparagine" evidence="2">
    <location>
        <position position="121"/>
    </location>
</feature>
<feature type="glycosylation site" description="N-linked (GlcNAc...) asparagine" evidence="2">
    <location>
        <position position="164"/>
    </location>
</feature>
<feature type="disulfide bond" evidence="3">
    <location>
        <begin position="31"/>
        <end position="162"/>
    </location>
</feature>
<feature type="disulfide bond" evidence="3">
    <location>
        <begin position="49"/>
        <end position="65"/>
    </location>
</feature>
<feature type="disulfide bond" evidence="3">
    <location>
        <begin position="97"/>
        <end position="255"/>
    </location>
</feature>
<feature type="disulfide bond" evidence="3">
    <location>
        <begin position="141"/>
        <end position="209"/>
    </location>
</feature>
<feature type="disulfide bond" evidence="3">
    <location>
        <begin position="173"/>
        <end position="188"/>
    </location>
</feature>
<feature type="disulfide bond" evidence="3">
    <location>
        <begin position="199"/>
        <end position="224"/>
    </location>
</feature>
<accession>Q71QI5</accession>
<dbReference type="EC" id="3.4.21.-"/>
<dbReference type="EMBL" id="AF395772">
    <property type="protein sequence ID" value="AAQ02902.1"/>
    <property type="molecule type" value="mRNA"/>
</dbReference>
<dbReference type="SMR" id="Q71QI5"/>
<dbReference type="MEROPS" id="S01.497"/>
<dbReference type="GO" id="GO:0005576">
    <property type="term" value="C:extracellular region"/>
    <property type="evidence" value="ECO:0007669"/>
    <property type="project" value="UniProtKB-SubCell"/>
</dbReference>
<dbReference type="GO" id="GO:0030141">
    <property type="term" value="C:secretory granule"/>
    <property type="evidence" value="ECO:0007669"/>
    <property type="project" value="TreeGrafter"/>
</dbReference>
<dbReference type="GO" id="GO:0004252">
    <property type="term" value="F:serine-type endopeptidase activity"/>
    <property type="evidence" value="ECO:0007669"/>
    <property type="project" value="InterPro"/>
</dbReference>
<dbReference type="GO" id="GO:0090729">
    <property type="term" value="F:toxin activity"/>
    <property type="evidence" value="ECO:0007669"/>
    <property type="project" value="UniProtKB-KW"/>
</dbReference>
<dbReference type="GO" id="GO:0006508">
    <property type="term" value="P:proteolysis"/>
    <property type="evidence" value="ECO:0007669"/>
    <property type="project" value="UniProtKB-KW"/>
</dbReference>
<dbReference type="CDD" id="cd00190">
    <property type="entry name" value="Tryp_SPc"/>
    <property type="match status" value="1"/>
</dbReference>
<dbReference type="FunFam" id="2.40.10.10:FF:000158">
    <property type="entry name" value="Thrombin-like enzyme saxthrombin"/>
    <property type="match status" value="1"/>
</dbReference>
<dbReference type="FunFam" id="2.40.10.10:FF:000153">
    <property type="entry name" value="Venom plasminogen activator TSV-PA"/>
    <property type="match status" value="1"/>
</dbReference>
<dbReference type="Gene3D" id="2.40.10.10">
    <property type="entry name" value="Trypsin-like serine proteases"/>
    <property type="match status" value="2"/>
</dbReference>
<dbReference type="InterPro" id="IPR009003">
    <property type="entry name" value="Peptidase_S1_PA"/>
</dbReference>
<dbReference type="InterPro" id="IPR043504">
    <property type="entry name" value="Peptidase_S1_PA_chymotrypsin"/>
</dbReference>
<dbReference type="InterPro" id="IPR001314">
    <property type="entry name" value="Peptidase_S1A"/>
</dbReference>
<dbReference type="InterPro" id="IPR001254">
    <property type="entry name" value="Trypsin_dom"/>
</dbReference>
<dbReference type="InterPro" id="IPR018114">
    <property type="entry name" value="TRYPSIN_HIS"/>
</dbReference>
<dbReference type="InterPro" id="IPR033116">
    <property type="entry name" value="TRYPSIN_SER"/>
</dbReference>
<dbReference type="PANTHER" id="PTHR24271:SF47">
    <property type="entry name" value="KALLIKREIN-1"/>
    <property type="match status" value="1"/>
</dbReference>
<dbReference type="PANTHER" id="PTHR24271">
    <property type="entry name" value="KALLIKREIN-RELATED"/>
    <property type="match status" value="1"/>
</dbReference>
<dbReference type="Pfam" id="PF00089">
    <property type="entry name" value="Trypsin"/>
    <property type="match status" value="1"/>
</dbReference>
<dbReference type="PRINTS" id="PR00722">
    <property type="entry name" value="CHYMOTRYPSIN"/>
</dbReference>
<dbReference type="SMART" id="SM00020">
    <property type="entry name" value="Tryp_SPc"/>
    <property type="match status" value="1"/>
</dbReference>
<dbReference type="SUPFAM" id="SSF50494">
    <property type="entry name" value="Trypsin-like serine proteases"/>
    <property type="match status" value="1"/>
</dbReference>
<dbReference type="PROSITE" id="PS50240">
    <property type="entry name" value="TRYPSIN_DOM"/>
    <property type="match status" value="1"/>
</dbReference>
<dbReference type="PROSITE" id="PS00134">
    <property type="entry name" value="TRYPSIN_HIS"/>
    <property type="match status" value="1"/>
</dbReference>
<dbReference type="PROSITE" id="PS00135">
    <property type="entry name" value="TRYPSIN_SER"/>
    <property type="match status" value="1"/>
</dbReference>
<evidence type="ECO:0000250" key="1"/>
<evidence type="ECO:0000255" key="2"/>
<evidence type="ECO:0000255" key="3">
    <source>
        <dbReference type="PROSITE-ProRule" id="PRU00274"/>
    </source>
</evidence>
<protein>
    <recommendedName>
        <fullName>Snake venom serine protease KN3</fullName>
        <shortName>SVSP</shortName>
        <ecNumber>3.4.21.-</ecNumber>
    </recommendedName>
</protein>
<reference key="1">
    <citation type="submission" date="2001-06" db="EMBL/GenBank/DDBJ databases">
        <title>Identification of geographic variations and cloning of venom proteins of Trimeresurus stejnegeri: serine proteases and phospholipases.</title>
        <authorList>
            <person name="Tsai I.-H."/>
            <person name="Wang Y.-M."/>
        </authorList>
    </citation>
    <scope>NUCLEOTIDE SEQUENCE [MRNA]</scope>
    <source>
        <tissue>Venom gland</tissue>
    </source>
</reference>